<reference key="1">
    <citation type="submission" date="2006-06" db="EMBL/GenBank/DDBJ databases">
        <title>Complete sequence of Pseudoalteromonas atlantica T6c.</title>
        <authorList>
            <consortium name="US DOE Joint Genome Institute"/>
            <person name="Copeland A."/>
            <person name="Lucas S."/>
            <person name="Lapidus A."/>
            <person name="Barry K."/>
            <person name="Detter J.C."/>
            <person name="Glavina del Rio T."/>
            <person name="Hammon N."/>
            <person name="Israni S."/>
            <person name="Dalin E."/>
            <person name="Tice H."/>
            <person name="Pitluck S."/>
            <person name="Saunders E."/>
            <person name="Brettin T."/>
            <person name="Bruce D."/>
            <person name="Han C."/>
            <person name="Tapia R."/>
            <person name="Gilna P."/>
            <person name="Schmutz J."/>
            <person name="Larimer F."/>
            <person name="Land M."/>
            <person name="Hauser L."/>
            <person name="Kyrpides N."/>
            <person name="Kim E."/>
            <person name="Karls A.C."/>
            <person name="Bartlett D."/>
            <person name="Higgins B.P."/>
            <person name="Richardson P."/>
        </authorList>
    </citation>
    <scope>NUCLEOTIDE SEQUENCE [LARGE SCALE GENOMIC DNA]</scope>
    <source>
        <strain>T6c / ATCC BAA-1087</strain>
    </source>
</reference>
<keyword id="KW-0028">Amino-acid biosynthesis</keyword>
<keyword id="KW-0963">Cytoplasm</keyword>
<keyword id="KW-0368">Histidine biosynthesis</keyword>
<keyword id="KW-0456">Lyase</keyword>
<dbReference type="EC" id="4.3.2.10" evidence="1"/>
<dbReference type="EMBL" id="CP000388">
    <property type="protein sequence ID" value="ABG41395.1"/>
    <property type="molecule type" value="Genomic_DNA"/>
</dbReference>
<dbReference type="RefSeq" id="WP_011575652.1">
    <property type="nucleotide sequence ID" value="NC_008228.1"/>
</dbReference>
<dbReference type="SMR" id="Q15RU3"/>
<dbReference type="STRING" id="342610.Patl_2887"/>
<dbReference type="KEGG" id="pat:Patl_2887"/>
<dbReference type="eggNOG" id="COG0107">
    <property type="taxonomic scope" value="Bacteria"/>
</dbReference>
<dbReference type="HOGENOM" id="CLU_048577_4_0_6"/>
<dbReference type="OrthoDB" id="9781903at2"/>
<dbReference type="UniPathway" id="UPA00031">
    <property type="reaction ID" value="UER00010"/>
</dbReference>
<dbReference type="Proteomes" id="UP000001981">
    <property type="component" value="Chromosome"/>
</dbReference>
<dbReference type="GO" id="GO:0005737">
    <property type="term" value="C:cytoplasm"/>
    <property type="evidence" value="ECO:0007669"/>
    <property type="project" value="UniProtKB-SubCell"/>
</dbReference>
<dbReference type="GO" id="GO:0000107">
    <property type="term" value="F:imidazoleglycerol-phosphate synthase activity"/>
    <property type="evidence" value="ECO:0007669"/>
    <property type="project" value="UniProtKB-UniRule"/>
</dbReference>
<dbReference type="GO" id="GO:0016829">
    <property type="term" value="F:lyase activity"/>
    <property type="evidence" value="ECO:0007669"/>
    <property type="project" value="UniProtKB-KW"/>
</dbReference>
<dbReference type="GO" id="GO:0000105">
    <property type="term" value="P:L-histidine biosynthetic process"/>
    <property type="evidence" value="ECO:0007669"/>
    <property type="project" value="UniProtKB-UniRule"/>
</dbReference>
<dbReference type="CDD" id="cd04731">
    <property type="entry name" value="HisF"/>
    <property type="match status" value="1"/>
</dbReference>
<dbReference type="FunFam" id="3.20.20.70:FF:000006">
    <property type="entry name" value="Imidazole glycerol phosphate synthase subunit HisF"/>
    <property type="match status" value="1"/>
</dbReference>
<dbReference type="Gene3D" id="3.20.20.70">
    <property type="entry name" value="Aldolase class I"/>
    <property type="match status" value="1"/>
</dbReference>
<dbReference type="HAMAP" id="MF_01013">
    <property type="entry name" value="HisF"/>
    <property type="match status" value="1"/>
</dbReference>
<dbReference type="InterPro" id="IPR013785">
    <property type="entry name" value="Aldolase_TIM"/>
</dbReference>
<dbReference type="InterPro" id="IPR006062">
    <property type="entry name" value="His_biosynth"/>
</dbReference>
<dbReference type="InterPro" id="IPR004651">
    <property type="entry name" value="HisF"/>
</dbReference>
<dbReference type="InterPro" id="IPR050064">
    <property type="entry name" value="IGPS_HisA/HisF"/>
</dbReference>
<dbReference type="InterPro" id="IPR011060">
    <property type="entry name" value="RibuloseP-bd_barrel"/>
</dbReference>
<dbReference type="NCBIfam" id="TIGR00735">
    <property type="entry name" value="hisF"/>
    <property type="match status" value="1"/>
</dbReference>
<dbReference type="PANTHER" id="PTHR21235:SF2">
    <property type="entry name" value="IMIDAZOLE GLYCEROL PHOSPHATE SYNTHASE HISHF"/>
    <property type="match status" value="1"/>
</dbReference>
<dbReference type="PANTHER" id="PTHR21235">
    <property type="entry name" value="IMIDAZOLE GLYCEROL PHOSPHATE SYNTHASE SUBUNIT HISF/H IGP SYNTHASE SUBUNIT HISF/H"/>
    <property type="match status" value="1"/>
</dbReference>
<dbReference type="Pfam" id="PF00977">
    <property type="entry name" value="His_biosynth"/>
    <property type="match status" value="1"/>
</dbReference>
<dbReference type="SUPFAM" id="SSF51366">
    <property type="entry name" value="Ribulose-phoshate binding barrel"/>
    <property type="match status" value="1"/>
</dbReference>
<proteinExistence type="inferred from homology"/>
<feature type="chain" id="PRO_1000063116" description="Imidazole glycerol phosphate synthase subunit HisF">
    <location>
        <begin position="1"/>
        <end position="257"/>
    </location>
</feature>
<feature type="active site" evidence="1">
    <location>
        <position position="11"/>
    </location>
</feature>
<feature type="active site" evidence="1">
    <location>
        <position position="130"/>
    </location>
</feature>
<comment type="function">
    <text evidence="1">IGPS catalyzes the conversion of PRFAR and glutamine to IGP, AICAR and glutamate. The HisF subunit catalyzes the cyclization activity that produces IGP and AICAR from PRFAR using the ammonia provided by the HisH subunit.</text>
</comment>
<comment type="catalytic activity">
    <reaction evidence="1">
        <text>5-[(5-phospho-1-deoxy-D-ribulos-1-ylimino)methylamino]-1-(5-phospho-beta-D-ribosyl)imidazole-4-carboxamide + L-glutamine = D-erythro-1-(imidazol-4-yl)glycerol 3-phosphate + 5-amino-1-(5-phospho-beta-D-ribosyl)imidazole-4-carboxamide + L-glutamate + H(+)</text>
        <dbReference type="Rhea" id="RHEA:24793"/>
        <dbReference type="ChEBI" id="CHEBI:15378"/>
        <dbReference type="ChEBI" id="CHEBI:29985"/>
        <dbReference type="ChEBI" id="CHEBI:58278"/>
        <dbReference type="ChEBI" id="CHEBI:58359"/>
        <dbReference type="ChEBI" id="CHEBI:58475"/>
        <dbReference type="ChEBI" id="CHEBI:58525"/>
        <dbReference type="EC" id="4.3.2.10"/>
    </reaction>
</comment>
<comment type="pathway">
    <text evidence="1">Amino-acid biosynthesis; L-histidine biosynthesis; L-histidine from 5-phospho-alpha-D-ribose 1-diphosphate: step 5/9.</text>
</comment>
<comment type="subunit">
    <text evidence="1">Heterodimer of HisH and HisF.</text>
</comment>
<comment type="subcellular location">
    <subcellularLocation>
        <location evidence="1">Cytoplasm</location>
    </subcellularLocation>
</comment>
<comment type="similarity">
    <text evidence="1">Belongs to the HisA/HisF family.</text>
</comment>
<evidence type="ECO:0000255" key="1">
    <source>
        <dbReference type="HAMAP-Rule" id="MF_01013"/>
    </source>
</evidence>
<gene>
    <name evidence="1" type="primary">hisF</name>
    <name type="ordered locus">Patl_2887</name>
</gene>
<sequence length="257" mass="28382">MLARRIIPCLDVRDGLVVKGVKFRNHETIGEIVPLAELYAQQGADELVFYDITASSDQRVVDKSWVTRIAQVIDIPFCVAGGIKSVEDAGRILEMGADKISINSPALANPSLIRELHDTFGQQCVVVGIDSYFNEETGKYQVHQYTGDESRTQITRWQTADWVKEVQQHGAGEIVLNCMNQDGVRQGYDITQLTAIRENCAVPLIASGGAGEKVHFKDVFEQADVDGALAASVFHKGIIPIPELKAYLREQQVAIRD</sequence>
<accession>Q15RU3</accession>
<organism>
    <name type="scientific">Pseudoalteromonas atlantica (strain T6c / ATCC BAA-1087)</name>
    <dbReference type="NCBI Taxonomy" id="3042615"/>
    <lineage>
        <taxon>Bacteria</taxon>
        <taxon>Pseudomonadati</taxon>
        <taxon>Pseudomonadota</taxon>
        <taxon>Gammaproteobacteria</taxon>
        <taxon>Alteromonadales</taxon>
        <taxon>Alteromonadaceae</taxon>
        <taxon>Paraglaciecola</taxon>
    </lineage>
</organism>
<name>HIS6_PSEA6</name>
<protein>
    <recommendedName>
        <fullName evidence="1">Imidazole glycerol phosphate synthase subunit HisF</fullName>
        <ecNumber evidence="1">4.3.2.10</ecNumber>
    </recommendedName>
    <alternativeName>
        <fullName evidence="1">IGP synthase cyclase subunit</fullName>
    </alternativeName>
    <alternativeName>
        <fullName evidence="1">IGP synthase subunit HisF</fullName>
    </alternativeName>
    <alternativeName>
        <fullName evidence="1">ImGP synthase subunit HisF</fullName>
        <shortName evidence="1">IGPS subunit HisF</shortName>
    </alternativeName>
</protein>